<keyword id="KW-0963">Cytoplasm</keyword>
<keyword id="KW-0460">Magnesium</keyword>
<keyword id="KW-0479">Metal-binding</keyword>
<keyword id="KW-0566">Pantothenate biosynthesis</keyword>
<keyword id="KW-1185">Reference proteome</keyword>
<keyword id="KW-0808">Transferase</keyword>
<reference key="1">
    <citation type="journal article" date="2003" name="Science">
        <title>Genome of Geobacter sulfurreducens: metal reduction in subsurface environments.</title>
        <authorList>
            <person name="Methe B.A."/>
            <person name="Nelson K.E."/>
            <person name="Eisen J.A."/>
            <person name="Paulsen I.T."/>
            <person name="Nelson W.C."/>
            <person name="Heidelberg J.F."/>
            <person name="Wu D."/>
            <person name="Wu M."/>
            <person name="Ward N.L."/>
            <person name="Beanan M.J."/>
            <person name="Dodson R.J."/>
            <person name="Madupu R."/>
            <person name="Brinkac L.M."/>
            <person name="Daugherty S.C."/>
            <person name="DeBoy R.T."/>
            <person name="Durkin A.S."/>
            <person name="Gwinn M.L."/>
            <person name="Kolonay J.F."/>
            <person name="Sullivan S.A."/>
            <person name="Haft D.H."/>
            <person name="Selengut J."/>
            <person name="Davidsen T.M."/>
            <person name="Zafar N."/>
            <person name="White O."/>
            <person name="Tran B."/>
            <person name="Romero C."/>
            <person name="Forberger H.A."/>
            <person name="Weidman J.F."/>
            <person name="Khouri H.M."/>
            <person name="Feldblyum T.V."/>
            <person name="Utterback T.R."/>
            <person name="Van Aken S.E."/>
            <person name="Lovley D.R."/>
            <person name="Fraser C.M."/>
        </authorList>
    </citation>
    <scope>NUCLEOTIDE SEQUENCE [LARGE SCALE GENOMIC DNA]</scope>
    <source>
        <strain>ATCC 51573 / DSM 12127 / PCA</strain>
    </source>
</reference>
<name>PANB_GEOSL</name>
<comment type="function">
    <text evidence="1">Catalyzes the reversible reaction in which hydroxymethyl group from 5,10-methylenetetrahydrofolate is transferred onto alpha-ketoisovalerate to form ketopantoate.</text>
</comment>
<comment type="catalytic activity">
    <reaction evidence="1">
        <text>3-methyl-2-oxobutanoate + (6R)-5,10-methylene-5,6,7,8-tetrahydrofolate + H2O = 2-dehydropantoate + (6S)-5,6,7,8-tetrahydrofolate</text>
        <dbReference type="Rhea" id="RHEA:11824"/>
        <dbReference type="ChEBI" id="CHEBI:11561"/>
        <dbReference type="ChEBI" id="CHEBI:11851"/>
        <dbReference type="ChEBI" id="CHEBI:15377"/>
        <dbReference type="ChEBI" id="CHEBI:15636"/>
        <dbReference type="ChEBI" id="CHEBI:57453"/>
        <dbReference type="EC" id="2.1.2.11"/>
    </reaction>
</comment>
<comment type="cofactor">
    <cofactor evidence="1">
        <name>Mg(2+)</name>
        <dbReference type="ChEBI" id="CHEBI:18420"/>
    </cofactor>
    <text evidence="1">Binds 1 Mg(2+) ion per subunit.</text>
</comment>
<comment type="pathway">
    <text evidence="1">Cofactor biosynthesis; (R)-pantothenate biosynthesis; (R)-pantoate from 3-methyl-2-oxobutanoate: step 1/2.</text>
</comment>
<comment type="subunit">
    <text evidence="1">Homodecamer; pentamer of dimers.</text>
</comment>
<comment type="subcellular location">
    <subcellularLocation>
        <location evidence="1">Cytoplasm</location>
    </subcellularLocation>
</comment>
<comment type="similarity">
    <text evidence="1">Belongs to the PanB family.</text>
</comment>
<protein>
    <recommendedName>
        <fullName evidence="1">3-methyl-2-oxobutanoate hydroxymethyltransferase</fullName>
        <ecNumber evidence="1">2.1.2.11</ecNumber>
    </recommendedName>
    <alternativeName>
        <fullName evidence="1">Ketopantoate hydroxymethyltransferase</fullName>
        <shortName evidence="1">KPHMT</shortName>
    </alternativeName>
</protein>
<sequence>MNRAKTILDIQKMKATGEKITVLTSYDYPFTRIMDECGIDMILVGDSVGVVFAGHDNTLPVTVDDMLYHTRAVTRARPKALVVTDMPFLSYQTDLRDARINAGRLVKEGGAEAVKLEGGAHVTDTIRAIVDMDIPVMAHIGLTPQSIHRMGGYKVQGKKDEQAQRLLEDALAVQEAGAFAVVLEGIPLKLAGRITAELSIPTIGIGAGPHCDGQVLVIHDILGLCEKYSPKFVKRYGDARTLISDAVASYISEVKKGEFPTEGHSFS</sequence>
<proteinExistence type="inferred from homology"/>
<organism>
    <name type="scientific">Geobacter sulfurreducens (strain ATCC 51573 / DSM 12127 / PCA)</name>
    <dbReference type="NCBI Taxonomy" id="243231"/>
    <lineage>
        <taxon>Bacteria</taxon>
        <taxon>Pseudomonadati</taxon>
        <taxon>Thermodesulfobacteriota</taxon>
        <taxon>Desulfuromonadia</taxon>
        <taxon>Geobacterales</taxon>
        <taxon>Geobacteraceae</taxon>
        <taxon>Geobacter</taxon>
    </lineage>
</organism>
<gene>
    <name evidence="1" type="primary">panB</name>
    <name type="ordered locus">GSU1705</name>
</gene>
<evidence type="ECO:0000255" key="1">
    <source>
        <dbReference type="HAMAP-Rule" id="MF_00156"/>
    </source>
</evidence>
<feature type="chain" id="PRO_0000184848" description="3-methyl-2-oxobutanoate hydroxymethyltransferase">
    <location>
        <begin position="1"/>
        <end position="267"/>
    </location>
</feature>
<feature type="active site" description="Proton acceptor" evidence="1">
    <location>
        <position position="184"/>
    </location>
</feature>
<feature type="binding site" evidence="1">
    <location>
        <begin position="46"/>
        <end position="47"/>
    </location>
    <ligand>
        <name>3-methyl-2-oxobutanoate</name>
        <dbReference type="ChEBI" id="CHEBI:11851"/>
    </ligand>
</feature>
<feature type="binding site" evidence="1">
    <location>
        <position position="46"/>
    </location>
    <ligand>
        <name>Mg(2+)</name>
        <dbReference type="ChEBI" id="CHEBI:18420"/>
    </ligand>
</feature>
<feature type="binding site" evidence="1">
    <location>
        <position position="85"/>
    </location>
    <ligand>
        <name>3-methyl-2-oxobutanoate</name>
        <dbReference type="ChEBI" id="CHEBI:11851"/>
    </ligand>
</feature>
<feature type="binding site" evidence="1">
    <location>
        <position position="85"/>
    </location>
    <ligand>
        <name>Mg(2+)</name>
        <dbReference type="ChEBI" id="CHEBI:18420"/>
    </ligand>
</feature>
<feature type="binding site" evidence="1">
    <location>
        <position position="115"/>
    </location>
    <ligand>
        <name>3-methyl-2-oxobutanoate</name>
        <dbReference type="ChEBI" id="CHEBI:11851"/>
    </ligand>
</feature>
<feature type="binding site" evidence="1">
    <location>
        <position position="117"/>
    </location>
    <ligand>
        <name>Mg(2+)</name>
        <dbReference type="ChEBI" id="CHEBI:18420"/>
    </ligand>
</feature>
<accession>Q74CG8</accession>
<dbReference type="EC" id="2.1.2.11" evidence="1"/>
<dbReference type="EMBL" id="AE017180">
    <property type="protein sequence ID" value="AAR35083.1"/>
    <property type="molecule type" value="Genomic_DNA"/>
</dbReference>
<dbReference type="RefSeq" id="NP_952756.1">
    <property type="nucleotide sequence ID" value="NC_002939.5"/>
</dbReference>
<dbReference type="RefSeq" id="WP_010942349.1">
    <property type="nucleotide sequence ID" value="NC_002939.5"/>
</dbReference>
<dbReference type="SMR" id="Q74CG8"/>
<dbReference type="FunCoup" id="Q74CG8">
    <property type="interactions" value="461"/>
</dbReference>
<dbReference type="STRING" id="243231.GSU1705"/>
<dbReference type="EnsemblBacteria" id="AAR35083">
    <property type="protein sequence ID" value="AAR35083"/>
    <property type="gene ID" value="GSU1705"/>
</dbReference>
<dbReference type="KEGG" id="gsu:GSU1705"/>
<dbReference type="PATRIC" id="fig|243231.5.peg.1750"/>
<dbReference type="eggNOG" id="COG0413">
    <property type="taxonomic scope" value="Bacteria"/>
</dbReference>
<dbReference type="HOGENOM" id="CLU_036645_1_0_7"/>
<dbReference type="InParanoid" id="Q74CG8"/>
<dbReference type="OrthoDB" id="9781789at2"/>
<dbReference type="UniPathway" id="UPA00028">
    <property type="reaction ID" value="UER00003"/>
</dbReference>
<dbReference type="Proteomes" id="UP000000577">
    <property type="component" value="Chromosome"/>
</dbReference>
<dbReference type="GO" id="GO:0005737">
    <property type="term" value="C:cytoplasm"/>
    <property type="evidence" value="ECO:0000318"/>
    <property type="project" value="GO_Central"/>
</dbReference>
<dbReference type="GO" id="GO:0003864">
    <property type="term" value="F:3-methyl-2-oxobutanoate hydroxymethyltransferase activity"/>
    <property type="evidence" value="ECO:0000318"/>
    <property type="project" value="GO_Central"/>
</dbReference>
<dbReference type="GO" id="GO:0000287">
    <property type="term" value="F:magnesium ion binding"/>
    <property type="evidence" value="ECO:0000318"/>
    <property type="project" value="GO_Central"/>
</dbReference>
<dbReference type="GO" id="GO:0015940">
    <property type="term" value="P:pantothenate biosynthetic process"/>
    <property type="evidence" value="ECO:0000318"/>
    <property type="project" value="GO_Central"/>
</dbReference>
<dbReference type="CDD" id="cd06557">
    <property type="entry name" value="KPHMT-like"/>
    <property type="match status" value="1"/>
</dbReference>
<dbReference type="FunFam" id="3.20.20.60:FF:000003">
    <property type="entry name" value="3-methyl-2-oxobutanoate hydroxymethyltransferase"/>
    <property type="match status" value="1"/>
</dbReference>
<dbReference type="Gene3D" id="3.20.20.60">
    <property type="entry name" value="Phosphoenolpyruvate-binding domains"/>
    <property type="match status" value="1"/>
</dbReference>
<dbReference type="HAMAP" id="MF_00156">
    <property type="entry name" value="PanB"/>
    <property type="match status" value="1"/>
</dbReference>
<dbReference type="InterPro" id="IPR003700">
    <property type="entry name" value="Pantoate_hydroxy_MeTrfase"/>
</dbReference>
<dbReference type="InterPro" id="IPR015813">
    <property type="entry name" value="Pyrv/PenolPyrv_kinase-like_dom"/>
</dbReference>
<dbReference type="InterPro" id="IPR040442">
    <property type="entry name" value="Pyrv_kinase-like_dom_sf"/>
</dbReference>
<dbReference type="NCBIfam" id="TIGR00222">
    <property type="entry name" value="panB"/>
    <property type="match status" value="1"/>
</dbReference>
<dbReference type="NCBIfam" id="NF001452">
    <property type="entry name" value="PRK00311.1"/>
    <property type="match status" value="1"/>
</dbReference>
<dbReference type="PANTHER" id="PTHR20881">
    <property type="entry name" value="3-METHYL-2-OXOBUTANOATE HYDROXYMETHYLTRANSFERASE"/>
    <property type="match status" value="1"/>
</dbReference>
<dbReference type="PANTHER" id="PTHR20881:SF0">
    <property type="entry name" value="3-METHYL-2-OXOBUTANOATE HYDROXYMETHYLTRANSFERASE"/>
    <property type="match status" value="1"/>
</dbReference>
<dbReference type="Pfam" id="PF02548">
    <property type="entry name" value="Pantoate_transf"/>
    <property type="match status" value="1"/>
</dbReference>
<dbReference type="PIRSF" id="PIRSF000388">
    <property type="entry name" value="Pantoate_hydroxy_MeTrfase"/>
    <property type="match status" value="1"/>
</dbReference>
<dbReference type="SUPFAM" id="SSF51621">
    <property type="entry name" value="Phosphoenolpyruvate/pyruvate domain"/>
    <property type="match status" value="1"/>
</dbReference>